<feature type="peptide" id="PRO_0000443437" description="Brevinin-1OKa" evidence="2">
    <location>
        <begin position="1"/>
        <end position="22"/>
    </location>
</feature>
<feature type="modified residue" description="Lysine amide" evidence="2">
    <location>
        <position position="22"/>
    </location>
</feature>
<proteinExistence type="evidence at protein level"/>
<organism evidence="3">
    <name type="scientific">Nidirana okinavana</name>
    <name type="common">Kampira Falls frog</name>
    <name type="synonym">Babina okinavana</name>
    <dbReference type="NCBI Taxonomy" id="156870"/>
    <lineage>
        <taxon>Eukaryota</taxon>
        <taxon>Metazoa</taxon>
        <taxon>Chordata</taxon>
        <taxon>Craniata</taxon>
        <taxon>Vertebrata</taxon>
        <taxon>Euteleostomi</taxon>
        <taxon>Amphibia</taxon>
        <taxon>Batrachia</taxon>
        <taxon>Anura</taxon>
        <taxon>Neobatrachia</taxon>
        <taxon>Ranoidea</taxon>
        <taxon>Ranidae</taxon>
        <taxon>Nidirana</taxon>
    </lineage>
</organism>
<reference evidence="4" key="1">
    <citation type="journal article" date="2005" name="Peptides">
        <title>A family of acyclic brevinin-1 peptides from the skin of the Ryukyu brown frog Rana okinavana.</title>
        <authorList>
            <person name="Conlon J.M."/>
            <person name="Sonnevend A."/>
            <person name="Jouenne T."/>
            <person name="Coquet L."/>
            <person name="Cosquer D."/>
            <person name="Vaudry H."/>
            <person name="Iwamuro S."/>
        </authorList>
    </citation>
    <scope>PROTEIN SEQUENCE</scope>
    <scope>MASS SPECTROMETRY</scope>
    <scope>AMIDATION AT LYS-22</scope>
    <source>
        <tissue evidence="3">Skin</tissue>
    </source>
</reference>
<protein>
    <recommendedName>
        <fullName evidence="3">Brevinin-1OKa</fullName>
    </recommendedName>
</protein>
<sequence length="22" mass="2292">FFGSMIGALAKGLPSLISLIKK</sequence>
<name>BR1A_NIDOK</name>
<accession>C0HL08</accession>
<dbReference type="GO" id="GO:0005576">
    <property type="term" value="C:extracellular region"/>
    <property type="evidence" value="ECO:0000314"/>
    <property type="project" value="UniProtKB"/>
</dbReference>
<dbReference type="GO" id="GO:0050829">
    <property type="term" value="P:defense response to Gram-negative bacterium"/>
    <property type="evidence" value="ECO:0000314"/>
    <property type="project" value="UniProtKB"/>
</dbReference>
<dbReference type="GO" id="GO:0050830">
    <property type="term" value="P:defense response to Gram-positive bacterium"/>
    <property type="evidence" value="ECO:0000314"/>
    <property type="project" value="UniProtKB"/>
</dbReference>
<dbReference type="GO" id="GO:0031640">
    <property type="term" value="P:killing of cells of another organism"/>
    <property type="evidence" value="ECO:0000314"/>
    <property type="project" value="UniProtKB"/>
</dbReference>
<evidence type="ECO:0000250" key="1">
    <source>
        <dbReference type="UniProtKB" id="P86027"/>
    </source>
</evidence>
<evidence type="ECO:0000269" key="2">
    <source>
    </source>
</evidence>
<evidence type="ECO:0000303" key="3">
    <source>
    </source>
</evidence>
<evidence type="ECO:0000305" key="4"/>
<evidence type="ECO:0000305" key="5">
    <source>
    </source>
</evidence>
<keyword id="KW-0027">Amidation</keyword>
<keyword id="KW-0044">Antibiotic</keyword>
<keyword id="KW-0929">Antimicrobial</keyword>
<keyword id="KW-0903">Direct protein sequencing</keyword>
<keyword id="KW-0964">Secreted</keyword>
<comment type="function">
    <text evidence="2">Antimicrobial peptide. Active against Gram-negative bacterium E.coli (MIC=12.5 uM) and against Gram-positive bacterium S.aureus (MIC=12.5 uM).</text>
</comment>
<comment type="subcellular location">
    <subcellularLocation>
        <location evidence="1">Secreted</location>
    </subcellularLocation>
</comment>
<comment type="tissue specificity">
    <text evidence="5">Expressed by the skin glands.</text>
</comment>
<comment type="mass spectrometry" mass="2290.4" method="MALDI" evidence="2"/>
<comment type="similarity">
    <text evidence="3">Belongs to the frog skin active peptide (FSAP) family. Brevinin subfamily.</text>
</comment>